<dbReference type="EMBL" id="DQ898156">
    <property type="protein sequence ID" value="ABI32462.1"/>
    <property type="molecule type" value="Genomic_DNA"/>
</dbReference>
<dbReference type="RefSeq" id="YP_740156.1">
    <property type="nucleotide sequence ID" value="NC_008325.1"/>
</dbReference>
<dbReference type="SMR" id="Q0G9S3"/>
<dbReference type="GeneID" id="4266783"/>
<dbReference type="OMA" id="WFAQPKK"/>
<dbReference type="GO" id="GO:0009507">
    <property type="term" value="C:chloroplast"/>
    <property type="evidence" value="ECO:0007669"/>
    <property type="project" value="UniProtKB-SubCell"/>
</dbReference>
<dbReference type="GO" id="GO:0022627">
    <property type="term" value="C:cytosolic small ribosomal subunit"/>
    <property type="evidence" value="ECO:0007669"/>
    <property type="project" value="TreeGrafter"/>
</dbReference>
<dbReference type="GO" id="GO:0019843">
    <property type="term" value="F:rRNA binding"/>
    <property type="evidence" value="ECO:0007669"/>
    <property type="project" value="UniProtKB-UniRule"/>
</dbReference>
<dbReference type="GO" id="GO:0003735">
    <property type="term" value="F:structural constituent of ribosome"/>
    <property type="evidence" value="ECO:0007669"/>
    <property type="project" value="InterPro"/>
</dbReference>
<dbReference type="GO" id="GO:0006412">
    <property type="term" value="P:translation"/>
    <property type="evidence" value="ECO:0007669"/>
    <property type="project" value="UniProtKB-UniRule"/>
</dbReference>
<dbReference type="CDD" id="cd02412">
    <property type="entry name" value="KH-II_30S_S3"/>
    <property type="match status" value="1"/>
</dbReference>
<dbReference type="FunFam" id="3.30.1140.32:FF:000003">
    <property type="entry name" value="30S ribosomal protein S3, chloroplastic"/>
    <property type="match status" value="1"/>
</dbReference>
<dbReference type="FunFam" id="3.30.300.20:FF:000008">
    <property type="entry name" value="30S ribosomal protein S3, chloroplastic"/>
    <property type="match status" value="1"/>
</dbReference>
<dbReference type="Gene3D" id="3.30.300.20">
    <property type="match status" value="1"/>
</dbReference>
<dbReference type="Gene3D" id="3.30.1140.32">
    <property type="entry name" value="Ribosomal protein S3, C-terminal domain"/>
    <property type="match status" value="1"/>
</dbReference>
<dbReference type="HAMAP" id="MF_01309_B">
    <property type="entry name" value="Ribosomal_uS3_B"/>
    <property type="match status" value="1"/>
</dbReference>
<dbReference type="InterPro" id="IPR015946">
    <property type="entry name" value="KH_dom-like_a/b"/>
</dbReference>
<dbReference type="InterPro" id="IPR004044">
    <property type="entry name" value="KH_dom_type_2"/>
</dbReference>
<dbReference type="InterPro" id="IPR009019">
    <property type="entry name" value="KH_sf_prok-type"/>
</dbReference>
<dbReference type="InterPro" id="IPR036419">
    <property type="entry name" value="Ribosomal_S3_C_sf"/>
</dbReference>
<dbReference type="InterPro" id="IPR005704">
    <property type="entry name" value="Ribosomal_uS3_bac-typ"/>
</dbReference>
<dbReference type="InterPro" id="IPR001351">
    <property type="entry name" value="Ribosomal_uS3_C"/>
</dbReference>
<dbReference type="InterPro" id="IPR018280">
    <property type="entry name" value="Ribosomal_uS3_CS"/>
</dbReference>
<dbReference type="NCBIfam" id="TIGR01009">
    <property type="entry name" value="rpsC_bact"/>
    <property type="match status" value="1"/>
</dbReference>
<dbReference type="PANTHER" id="PTHR11760">
    <property type="entry name" value="30S/40S RIBOSOMAL PROTEIN S3"/>
    <property type="match status" value="1"/>
</dbReference>
<dbReference type="PANTHER" id="PTHR11760:SF19">
    <property type="entry name" value="SMALL RIBOSOMAL SUBUNIT PROTEIN US3C"/>
    <property type="match status" value="1"/>
</dbReference>
<dbReference type="Pfam" id="PF00189">
    <property type="entry name" value="Ribosomal_S3_C"/>
    <property type="match status" value="1"/>
</dbReference>
<dbReference type="SUPFAM" id="SSF54814">
    <property type="entry name" value="Prokaryotic type KH domain (KH-domain type II)"/>
    <property type="match status" value="1"/>
</dbReference>
<dbReference type="SUPFAM" id="SSF54821">
    <property type="entry name" value="Ribosomal protein S3 C-terminal domain"/>
    <property type="match status" value="1"/>
</dbReference>
<dbReference type="PROSITE" id="PS50823">
    <property type="entry name" value="KH_TYPE_2"/>
    <property type="match status" value="1"/>
</dbReference>
<dbReference type="PROSITE" id="PS00548">
    <property type="entry name" value="RIBOSOMAL_S3"/>
    <property type="match status" value="1"/>
</dbReference>
<keyword id="KW-0150">Chloroplast</keyword>
<keyword id="KW-0934">Plastid</keyword>
<keyword id="KW-0687">Ribonucleoprotein</keyword>
<keyword id="KW-0689">Ribosomal protein</keyword>
<keyword id="KW-0694">RNA-binding</keyword>
<keyword id="KW-0699">rRNA-binding</keyword>
<evidence type="ECO:0000250" key="1"/>
<evidence type="ECO:0000305" key="2"/>
<geneLocation type="chloroplast"/>
<comment type="subunit">
    <text evidence="1">Part of the 30S ribosomal subunit.</text>
</comment>
<comment type="subcellular location">
    <subcellularLocation>
        <location>Plastid</location>
        <location>Chloroplast</location>
    </subcellularLocation>
</comment>
<comment type="similarity">
    <text evidence="2">Belongs to the universal ribosomal protein uS3 family.</text>
</comment>
<feature type="chain" id="PRO_0000276989" description="Small ribosomal subunit protein uS3c">
    <location>
        <begin position="1"/>
        <end position="218"/>
    </location>
</feature>
<feature type="domain" description="KH type-2">
    <location>
        <begin position="47"/>
        <end position="118"/>
    </location>
</feature>
<protein>
    <recommendedName>
        <fullName evidence="2">Small ribosomal subunit protein uS3c</fullName>
    </recommendedName>
    <alternativeName>
        <fullName>30S ribosomal protein S3, chloroplastic</fullName>
    </alternativeName>
</protein>
<reference key="1">
    <citation type="journal article" date="2006" name="BMC Genomics">
        <title>Complete plastid genome sequence of Daucus carota: implications for biotechnology and phylogeny of angiosperms.</title>
        <authorList>
            <person name="Ruhlman T."/>
            <person name="Lee S.-B."/>
            <person name="Jansen R.K."/>
            <person name="Hostetler J.B."/>
            <person name="Tallon L.J."/>
            <person name="Town C.D."/>
            <person name="Daniell H."/>
        </authorList>
    </citation>
    <scope>NUCLEOTIDE SEQUENCE [LARGE SCALE GENOMIC DNA]</scope>
    <source>
        <strain>cv. Danvers Half-long</strain>
    </source>
</reference>
<proteinExistence type="inferred from homology"/>
<gene>
    <name type="primary">rps3</name>
</gene>
<name>RR3_DAUCA</name>
<organism>
    <name type="scientific">Daucus carota</name>
    <name type="common">Wild carrot</name>
    <dbReference type="NCBI Taxonomy" id="4039"/>
    <lineage>
        <taxon>Eukaryota</taxon>
        <taxon>Viridiplantae</taxon>
        <taxon>Streptophyta</taxon>
        <taxon>Embryophyta</taxon>
        <taxon>Tracheophyta</taxon>
        <taxon>Spermatophyta</taxon>
        <taxon>Magnoliopsida</taxon>
        <taxon>eudicotyledons</taxon>
        <taxon>Gunneridae</taxon>
        <taxon>Pentapetalae</taxon>
        <taxon>asterids</taxon>
        <taxon>campanulids</taxon>
        <taxon>Apiales</taxon>
        <taxon>Apiaceae</taxon>
        <taxon>Apioideae</taxon>
        <taxon>Scandiceae</taxon>
        <taxon>Daucinae</taxon>
        <taxon>Daucus</taxon>
        <taxon>Daucus sect. Daucus</taxon>
    </lineage>
</organism>
<accession>Q0G9S3</accession>
<sequence length="218" mass="25058">MGQKINPLGFRLGTTQSHHSLWFTQPKNYSEGLQEDQKIRDFIKNYVQKNLKISSGVEGIARIEIHKRIDLIQVIIYMGFPKLLIENRPGGIEKLQMNLQKEFNCVNRKLNITITRIAKPYGSPNILAEFIAGQLKNRVSFRKAMKKAIELTEQADTKGIQVQISGRIDGKEIARVEWIREGRVPLQTIRAKIDYCSYTVRTIYGVLGIKIWIFLDGE</sequence>